<reference key="1">
    <citation type="journal article" date="2005" name="J. Bacteriol.">
        <title>Whole-genome sequence analysis of Pseudomonas syringae pv. phaseolicola 1448A reveals divergence among pathovars in genes involved in virulence and transposition.</title>
        <authorList>
            <person name="Joardar V."/>
            <person name="Lindeberg M."/>
            <person name="Jackson R.W."/>
            <person name="Selengut J."/>
            <person name="Dodson R."/>
            <person name="Brinkac L.M."/>
            <person name="Daugherty S.C."/>
            <person name="DeBoy R.T."/>
            <person name="Durkin A.S."/>
            <person name="Gwinn Giglio M."/>
            <person name="Madupu R."/>
            <person name="Nelson W.C."/>
            <person name="Rosovitz M.J."/>
            <person name="Sullivan S.A."/>
            <person name="Crabtree J."/>
            <person name="Creasy T."/>
            <person name="Davidsen T.M."/>
            <person name="Haft D.H."/>
            <person name="Zafar N."/>
            <person name="Zhou L."/>
            <person name="Halpin R."/>
            <person name="Holley T."/>
            <person name="Khouri H.M."/>
            <person name="Feldblyum T.V."/>
            <person name="White O."/>
            <person name="Fraser C.M."/>
            <person name="Chatterjee A.K."/>
            <person name="Cartinhour S."/>
            <person name="Schneider D."/>
            <person name="Mansfield J.W."/>
            <person name="Collmer A."/>
            <person name="Buell R."/>
        </authorList>
    </citation>
    <scope>NUCLEOTIDE SEQUENCE [LARGE SCALE GENOMIC DNA]</scope>
    <source>
        <strain>1448A / Race 6</strain>
    </source>
</reference>
<comment type="function">
    <text evidence="1">The RuvA-RuvB-RuvC complex processes Holliday junction (HJ) DNA during genetic recombination and DNA repair, while the RuvA-RuvB complex plays an important role in the rescue of blocked DNA replication forks via replication fork reversal (RFR). RuvA specifically binds to HJ cruciform DNA, conferring on it an open structure. The RuvB hexamer acts as an ATP-dependent pump, pulling dsDNA into and through the RuvAB complex. HJ branch migration allows RuvC to scan DNA until it finds its consensus sequence, where it cleaves and resolves the cruciform DNA.</text>
</comment>
<comment type="subunit">
    <text evidence="1">Homotetramer. Forms an RuvA(8)-RuvB(12)-Holliday junction (HJ) complex. HJ DNA is sandwiched between 2 RuvA tetramers; dsDNA enters through RuvA and exits via RuvB. An RuvB hexamer assembles on each DNA strand where it exits the tetramer. Each RuvB hexamer is contacted by two RuvA subunits (via domain III) on 2 adjacent RuvB subunits; this complex drives branch migration. In the full resolvosome a probable DNA-RuvA(4)-RuvB(12)-RuvC(2) complex forms which resolves the HJ.</text>
</comment>
<comment type="subcellular location">
    <subcellularLocation>
        <location evidence="1">Cytoplasm</location>
    </subcellularLocation>
</comment>
<comment type="domain">
    <text evidence="1">Has three domains with a flexible linker between the domains II and III and assumes an 'L' shape. Domain III is highly mobile and contacts RuvB.</text>
</comment>
<comment type="similarity">
    <text evidence="1">Belongs to the RuvA family.</text>
</comment>
<evidence type="ECO:0000255" key="1">
    <source>
        <dbReference type="HAMAP-Rule" id="MF_00031"/>
    </source>
</evidence>
<dbReference type="EMBL" id="CP000058">
    <property type="protein sequence ID" value="AAZ33838.1"/>
    <property type="molecule type" value="Genomic_DNA"/>
</dbReference>
<dbReference type="RefSeq" id="WP_004657901.1">
    <property type="nucleotide sequence ID" value="NC_005773.3"/>
</dbReference>
<dbReference type="SMR" id="Q48FC4"/>
<dbReference type="GeneID" id="96217810"/>
<dbReference type="KEGG" id="psp:PSPPH_3773"/>
<dbReference type="eggNOG" id="COG0632">
    <property type="taxonomic scope" value="Bacteria"/>
</dbReference>
<dbReference type="HOGENOM" id="CLU_087936_0_0_6"/>
<dbReference type="Proteomes" id="UP000000551">
    <property type="component" value="Chromosome"/>
</dbReference>
<dbReference type="GO" id="GO:0005737">
    <property type="term" value="C:cytoplasm"/>
    <property type="evidence" value="ECO:0007669"/>
    <property type="project" value="UniProtKB-SubCell"/>
</dbReference>
<dbReference type="GO" id="GO:0009379">
    <property type="term" value="C:Holliday junction helicase complex"/>
    <property type="evidence" value="ECO:0007669"/>
    <property type="project" value="InterPro"/>
</dbReference>
<dbReference type="GO" id="GO:0048476">
    <property type="term" value="C:Holliday junction resolvase complex"/>
    <property type="evidence" value="ECO:0007669"/>
    <property type="project" value="UniProtKB-UniRule"/>
</dbReference>
<dbReference type="GO" id="GO:0005524">
    <property type="term" value="F:ATP binding"/>
    <property type="evidence" value="ECO:0007669"/>
    <property type="project" value="InterPro"/>
</dbReference>
<dbReference type="GO" id="GO:0000400">
    <property type="term" value="F:four-way junction DNA binding"/>
    <property type="evidence" value="ECO:0007669"/>
    <property type="project" value="UniProtKB-UniRule"/>
</dbReference>
<dbReference type="GO" id="GO:0009378">
    <property type="term" value="F:four-way junction helicase activity"/>
    <property type="evidence" value="ECO:0007669"/>
    <property type="project" value="InterPro"/>
</dbReference>
<dbReference type="GO" id="GO:0006310">
    <property type="term" value="P:DNA recombination"/>
    <property type="evidence" value="ECO:0007669"/>
    <property type="project" value="UniProtKB-UniRule"/>
</dbReference>
<dbReference type="GO" id="GO:0006281">
    <property type="term" value="P:DNA repair"/>
    <property type="evidence" value="ECO:0007669"/>
    <property type="project" value="UniProtKB-UniRule"/>
</dbReference>
<dbReference type="CDD" id="cd14332">
    <property type="entry name" value="UBA_RuvA_C"/>
    <property type="match status" value="1"/>
</dbReference>
<dbReference type="Gene3D" id="1.10.150.20">
    <property type="entry name" value="5' to 3' exonuclease, C-terminal subdomain"/>
    <property type="match status" value="1"/>
</dbReference>
<dbReference type="Gene3D" id="1.10.8.10">
    <property type="entry name" value="DNA helicase RuvA subunit, C-terminal domain"/>
    <property type="match status" value="1"/>
</dbReference>
<dbReference type="Gene3D" id="2.40.50.140">
    <property type="entry name" value="Nucleic acid-binding proteins"/>
    <property type="match status" value="1"/>
</dbReference>
<dbReference type="HAMAP" id="MF_00031">
    <property type="entry name" value="DNA_HJ_migration_RuvA"/>
    <property type="match status" value="1"/>
</dbReference>
<dbReference type="InterPro" id="IPR013849">
    <property type="entry name" value="DNA_helicase_Holl-junc_RuvA_I"/>
</dbReference>
<dbReference type="InterPro" id="IPR003583">
    <property type="entry name" value="Hlx-hairpin-Hlx_DNA-bd_motif"/>
</dbReference>
<dbReference type="InterPro" id="IPR012340">
    <property type="entry name" value="NA-bd_OB-fold"/>
</dbReference>
<dbReference type="InterPro" id="IPR000085">
    <property type="entry name" value="RuvA"/>
</dbReference>
<dbReference type="InterPro" id="IPR010994">
    <property type="entry name" value="RuvA_2-like"/>
</dbReference>
<dbReference type="InterPro" id="IPR011114">
    <property type="entry name" value="RuvA_C"/>
</dbReference>
<dbReference type="InterPro" id="IPR036267">
    <property type="entry name" value="RuvA_C_sf"/>
</dbReference>
<dbReference type="NCBIfam" id="TIGR00084">
    <property type="entry name" value="ruvA"/>
    <property type="match status" value="1"/>
</dbReference>
<dbReference type="Pfam" id="PF14520">
    <property type="entry name" value="HHH_5"/>
    <property type="match status" value="1"/>
</dbReference>
<dbReference type="Pfam" id="PF07499">
    <property type="entry name" value="RuvA_C"/>
    <property type="match status" value="1"/>
</dbReference>
<dbReference type="Pfam" id="PF01330">
    <property type="entry name" value="RuvA_N"/>
    <property type="match status" value="1"/>
</dbReference>
<dbReference type="SMART" id="SM00278">
    <property type="entry name" value="HhH1"/>
    <property type="match status" value="2"/>
</dbReference>
<dbReference type="SUPFAM" id="SSF46929">
    <property type="entry name" value="DNA helicase RuvA subunit, C-terminal domain"/>
    <property type="match status" value="1"/>
</dbReference>
<dbReference type="SUPFAM" id="SSF50249">
    <property type="entry name" value="Nucleic acid-binding proteins"/>
    <property type="match status" value="1"/>
</dbReference>
<dbReference type="SUPFAM" id="SSF47781">
    <property type="entry name" value="RuvA domain 2-like"/>
    <property type="match status" value="1"/>
</dbReference>
<feature type="chain" id="PRO_0000224896" description="Holliday junction branch migration complex subunit RuvA">
    <location>
        <begin position="1"/>
        <end position="202"/>
    </location>
</feature>
<feature type="region of interest" description="Domain I" evidence="1">
    <location>
        <begin position="1"/>
        <end position="64"/>
    </location>
</feature>
<feature type="region of interest" description="Domain II" evidence="1">
    <location>
        <begin position="65"/>
        <end position="143"/>
    </location>
</feature>
<feature type="region of interest" description="Flexible linker" evidence="1">
    <location>
        <begin position="144"/>
        <end position="153"/>
    </location>
</feature>
<feature type="region of interest" description="Domain III" evidence="1">
    <location>
        <begin position="154"/>
        <end position="202"/>
    </location>
</feature>
<proteinExistence type="inferred from homology"/>
<protein>
    <recommendedName>
        <fullName evidence="1">Holliday junction branch migration complex subunit RuvA</fullName>
    </recommendedName>
</protein>
<name>RUVA_PSE14</name>
<gene>
    <name evidence="1" type="primary">ruvA</name>
    <name type="ordered locus">PSPPH_3773</name>
</gene>
<keyword id="KW-0963">Cytoplasm</keyword>
<keyword id="KW-0227">DNA damage</keyword>
<keyword id="KW-0233">DNA recombination</keyword>
<keyword id="KW-0234">DNA repair</keyword>
<keyword id="KW-0238">DNA-binding</keyword>
<organism>
    <name type="scientific">Pseudomonas savastanoi pv. phaseolicola (strain 1448A / Race 6)</name>
    <name type="common">Pseudomonas syringae pv. phaseolicola (strain 1448A / Race 6)</name>
    <dbReference type="NCBI Taxonomy" id="264730"/>
    <lineage>
        <taxon>Bacteria</taxon>
        <taxon>Pseudomonadati</taxon>
        <taxon>Pseudomonadota</taxon>
        <taxon>Gammaproteobacteria</taxon>
        <taxon>Pseudomonadales</taxon>
        <taxon>Pseudomonadaceae</taxon>
        <taxon>Pseudomonas</taxon>
    </lineage>
</organism>
<accession>Q48FC4</accession>
<sequence length="202" mass="22154">MIGRLRGSLAEKQPPHLVLDVNGVGYELEVPMTTLYRLPHVGETVTLHTHLVVREDAHLLYGFYEKRERELFRELIRLNGVGPKLALALMSGLEVDELVRCVQAQDTSALTRIPGVGKKTAERLLVELKDRFKAWESLPGTFTLVSNGPNQAEPVASAESDAVSALISLGYKPQEASKAVSAIKEKDLSSADLIRRALKGMG</sequence>